<protein>
    <recommendedName>
        <fullName evidence="3">Dolichyl-diphosphooligosaccharide--protein glycosyltransferase subunit DAD1</fullName>
        <shortName evidence="3">Oligosaccharyl transferase subunit DAD1</shortName>
    </recommendedName>
    <alternativeName>
        <fullName evidence="8">Defender against apoptotic cell death 1</fullName>
    </alternativeName>
    <alternativeName>
        <fullName evidence="3">Defender against cell death 1</fullName>
        <shortName evidence="6">AvDAD1</shortName>
        <shortName evidence="3">DAD-1</shortName>
    </alternativeName>
</protein>
<accession>Q8I7Z2</accession>
<proteinExistence type="evidence at transcript level"/>
<reference evidence="7 8" key="1">
    <citation type="journal article" date="2003" name="Comp. Biochem. Physiol.">
        <title>cDNA cloning of a defender against apoptotic cell death 1 (DAD1) homologue, responsive to external temperature stimulus from the spider, Araneus ventricosus.</title>
        <authorList>
            <person name="Lee K.S."/>
            <person name="Chung E.H."/>
            <person name="Han J.H."/>
            <person name="Sohn H.D."/>
            <person name="Jin B.R."/>
        </authorList>
    </citation>
    <scope>NUCLEOTIDE SEQUENCE [MRNA]</scope>
    <scope>TISSUE SPECIFICITY</scope>
    <scope>INDUCTION</scope>
</reference>
<dbReference type="EMBL" id="AY166868">
    <property type="protein sequence ID" value="AAN86571.1"/>
    <property type="molecule type" value="mRNA"/>
</dbReference>
<dbReference type="SMR" id="Q8I7Z2"/>
<dbReference type="UniPathway" id="UPA00378"/>
<dbReference type="GO" id="GO:0008250">
    <property type="term" value="C:oligosaccharyltransferase complex"/>
    <property type="evidence" value="ECO:0007669"/>
    <property type="project" value="InterPro"/>
</dbReference>
<dbReference type="GO" id="GO:0006915">
    <property type="term" value="P:apoptotic process"/>
    <property type="evidence" value="ECO:0007669"/>
    <property type="project" value="UniProtKB-KW"/>
</dbReference>
<dbReference type="GO" id="GO:0006487">
    <property type="term" value="P:protein N-linked glycosylation"/>
    <property type="evidence" value="ECO:0007669"/>
    <property type="project" value="TreeGrafter"/>
</dbReference>
<dbReference type="GO" id="GO:0009409">
    <property type="term" value="P:response to cold"/>
    <property type="evidence" value="ECO:0000270"/>
    <property type="project" value="UniProtKB"/>
</dbReference>
<dbReference type="GO" id="GO:0009408">
    <property type="term" value="P:response to heat"/>
    <property type="evidence" value="ECO:0000270"/>
    <property type="project" value="UniProtKB"/>
</dbReference>
<dbReference type="InterPro" id="IPR003038">
    <property type="entry name" value="DAD/Ost2"/>
</dbReference>
<dbReference type="PANTHER" id="PTHR10705">
    <property type="entry name" value="DOLICHYL-DIPHOSPHOOLIGOSACCHARIDE--PROTEIN GLYCOSYLTRANSFERASE SUBUNIT DAD1"/>
    <property type="match status" value="1"/>
</dbReference>
<dbReference type="PANTHER" id="PTHR10705:SF0">
    <property type="entry name" value="DOLICHYL-DIPHOSPHOOLIGOSACCHARIDE--PROTEIN GLYCOSYLTRANSFERASE SUBUNIT DAD1"/>
    <property type="match status" value="1"/>
</dbReference>
<dbReference type="Pfam" id="PF02109">
    <property type="entry name" value="DAD"/>
    <property type="match status" value="1"/>
</dbReference>
<dbReference type="PIRSF" id="PIRSF005588">
    <property type="entry name" value="DAD"/>
    <property type="match status" value="1"/>
</dbReference>
<sequence>MGSSAFEVLTFFLKDYKANTPQKLKIIDAYLLYILLTGINQFLYCCLVGTFPFNSFLSGFISCVASFVLGVCLRLQVNPQNSSNFCGIPPERAFADFIFAHVVLHLVVMNFIG</sequence>
<name>DAD1_ARAVE</name>
<comment type="function">
    <text evidence="2">Subunit of the oligosaccharyl transferase (OST) complex that catalyzes the initial transfer of a defined glycan (Glc(3)Man(9)GlcNAc(2) in eukaryotes) from the lipid carrier dolichol-pyrophosphate to an asparagine residue within an Asn-X-Ser/Thr consensus motif in nascent polypeptide chains, the first step in protein N-glycosylation. N-glycosylation occurs cotranslationally and the complex associates with the Sec61 complex at the channel-forming translocon complex that mediates protein translocation across the endoplasmic reticulum (ER). All subunits are required for a maximal enzyme activity.</text>
</comment>
<comment type="pathway">
    <text>Protein modification; protein glycosylation.</text>
</comment>
<comment type="subunit">
    <text evidence="2">Component of the oligosaccharyltransferase (OST) complex.</text>
</comment>
<comment type="subcellular location">
    <subcellularLocation>
        <location evidence="1">Endoplasmic reticulum membrane</location>
        <topology evidence="1">Multi-pass membrane protein</topology>
    </subcellularLocation>
</comment>
<comment type="tissue specificity">
    <text evidence="5">Widely expressed. Greatest expression seen in the epidermis, intermediate expression in the fat body and midgut and mild expression observed in the silk gland.</text>
</comment>
<comment type="induction">
    <text evidence="5">Expression is significantly induced at 4 degrees Celsius and at 37 degrees Celsius compared to the control which was maintained at 25 degrees Celsius. There is a dramatic increase every 5 hours of each temperature treatment suggesting that over-expression is a cell response to inhibit programmed cell death by external temperature stimulus.</text>
</comment>
<comment type="similarity">
    <text evidence="4">Belongs to the DAD/OST2 family.</text>
</comment>
<gene>
    <name evidence="6" type="primary">DAD1</name>
</gene>
<feature type="chain" id="PRO_0000395396" description="Dolichyl-diphosphooligosaccharide--protein glycosyltransferase subunit DAD1">
    <location>
        <begin position="1"/>
        <end position="113"/>
    </location>
</feature>
<feature type="topological domain" description="Cytoplasmic" evidence="4">
    <location>
        <begin position="1"/>
        <end position="30"/>
    </location>
</feature>
<feature type="transmembrane region" description="Helical" evidence="4">
    <location>
        <begin position="31"/>
        <end position="51"/>
    </location>
</feature>
<feature type="topological domain" description="Lumenal" evidence="4">
    <location>
        <position position="52"/>
    </location>
</feature>
<feature type="transmembrane region" description="Helical" evidence="4">
    <location>
        <begin position="53"/>
        <end position="73"/>
    </location>
</feature>
<feature type="topological domain" description="Cytoplasmic" evidence="4">
    <location>
        <begin position="74"/>
        <end position="92"/>
    </location>
</feature>
<feature type="transmembrane region" description="Helical" evidence="4">
    <location>
        <begin position="93"/>
        <end position="113"/>
    </location>
</feature>
<keyword id="KW-0053">Apoptosis</keyword>
<keyword id="KW-0256">Endoplasmic reticulum</keyword>
<keyword id="KW-0472">Membrane</keyword>
<keyword id="KW-0812">Transmembrane</keyword>
<keyword id="KW-1133">Transmembrane helix</keyword>
<evidence type="ECO:0000250" key="1"/>
<evidence type="ECO:0000250" key="2">
    <source>
        <dbReference type="UniProtKB" id="E2R4X3"/>
    </source>
</evidence>
<evidence type="ECO:0000250" key="3">
    <source>
        <dbReference type="UniProtKB" id="Q9VLM5"/>
    </source>
</evidence>
<evidence type="ECO:0000255" key="4"/>
<evidence type="ECO:0000269" key="5">
    <source>
    </source>
</evidence>
<evidence type="ECO:0000303" key="6">
    <source>
    </source>
</evidence>
<evidence type="ECO:0000305" key="7"/>
<evidence type="ECO:0000312" key="8">
    <source>
        <dbReference type="EMBL" id="AAN86571.1"/>
    </source>
</evidence>
<organism>
    <name type="scientific">Araneus ventricosus</name>
    <name type="common">Orbweaver spider</name>
    <name type="synonym">Epeira ventricosa</name>
    <dbReference type="NCBI Taxonomy" id="182803"/>
    <lineage>
        <taxon>Eukaryota</taxon>
        <taxon>Metazoa</taxon>
        <taxon>Ecdysozoa</taxon>
        <taxon>Arthropoda</taxon>
        <taxon>Chelicerata</taxon>
        <taxon>Arachnida</taxon>
        <taxon>Araneae</taxon>
        <taxon>Araneomorphae</taxon>
        <taxon>Entelegynae</taxon>
        <taxon>Araneoidea</taxon>
        <taxon>Araneidae</taxon>
        <taxon>Araneus</taxon>
    </lineage>
</organism>